<reference key="1">
    <citation type="journal article" date="1997" name="J. Bacteriol.">
        <title>A [2Fe-2S] ferredoxin (FdVI) is essential for growth of the photosynthetic bacterium Rhodobacter capsulatus.</title>
        <authorList>
            <person name="Armengaud J."/>
            <person name="Meyer C."/>
            <person name="Jouanneau Y."/>
        </authorList>
    </citation>
    <scope>NUCLEOTIDE SEQUENCE [GENOMIC DNA]</scope>
    <scope>FUNCTION</scope>
    <scope>INDUCTION</scope>
    <scope>DISRUPTION PHENOTYPE</scope>
    <source>
        <strain>ATCC 33303 / B10</strain>
    </source>
</reference>
<reference key="2">
    <citation type="journal article" date="1994" name="Eur. J. Biochem.">
        <title>Purification of a sixth ferredoxin from Rhodobacter capsulatus. Primary structure and biochemical properties.</title>
        <authorList>
            <person name="Naud I."/>
            <person name="Vincon M."/>
            <person name="Garin J."/>
            <person name="Gaillard J."/>
            <person name="Forest E."/>
            <person name="Jouanneau Y."/>
        </authorList>
    </citation>
    <scope>PROTEIN SEQUENCE OF 2-107</scope>
    <scope>COFACTOR</scope>
    <scope>MASS SPECTROMETRY</scope>
    <source>
        <strain>ATCC 33303 / B10</strain>
    </source>
</reference>
<reference key="3">
    <citation type="journal article" date="2001" name="Acta Crystallogr. D">
        <title>Crystallization and preliminary X-ray diffraction analysis of a [2Fe-2S] ferredoxin (FdVI) from Rhodobacter capsulatus.</title>
        <authorList>
            <person name="Armengaud J."/>
            <person name="Sainz G."/>
            <person name="Jouanneau Y."/>
            <person name="Sieker L.C."/>
        </authorList>
    </citation>
    <scope>X-RAY CRYSTALLOGRAPHY (2.07 ANGSTROMS) IN COMPLEX WITH IRON-SULFUR (2FE-2S)</scope>
    <scope>COFACTOR</scope>
    <source>
        <strain>ATCC 33303 / B10</strain>
    </source>
</reference>
<reference key="4">
    <citation type="journal article" date="2006" name="J. Biol. Inorg. Chem.">
        <title>Structure of a [2Fe-2S] ferredoxin from Rhodobacter capsulatus likely involved in Fe-S cluster biogenesis and conformational changes observed upon reduction.</title>
        <authorList>
            <person name="Sainz G."/>
            <person name="Jakoncic J."/>
            <person name="Sieker L.C."/>
            <person name="Stojanoff V."/>
            <person name="Sanishvili N."/>
            <person name="Asso M."/>
            <person name="Bertrand P."/>
            <person name="Armengaud J."/>
            <person name="Jouanneau Y."/>
        </authorList>
    </citation>
    <scope>X-RAY CRYSTALLOGRAPHY (2.00 ANGSTROMS) IN COMPLEX WITH IRON-SULFUR (2FE-2S)</scope>
    <scope>COFACTOR</scope>
    <source>
        <strain>ATCC 33303 / B10</strain>
    </source>
</reference>
<proteinExistence type="evidence at protein level"/>
<evidence type="ECO:0000255" key="1">
    <source>
        <dbReference type="PROSITE-ProRule" id="PRU00465"/>
    </source>
</evidence>
<evidence type="ECO:0000269" key="2">
    <source>
    </source>
</evidence>
<evidence type="ECO:0000269" key="3">
    <source>
    </source>
</evidence>
<evidence type="ECO:0000269" key="4">
    <source>
    </source>
</evidence>
<evidence type="ECO:0000269" key="5">
    <source>
    </source>
</evidence>
<evidence type="ECO:0000303" key="6">
    <source>
    </source>
</evidence>
<evidence type="ECO:0000303" key="7">
    <source>
    </source>
</evidence>
<evidence type="ECO:0000303" key="8">
    <source>
    </source>
</evidence>
<evidence type="ECO:0000305" key="9"/>
<evidence type="ECO:0007829" key="10">
    <source>
        <dbReference type="PDB" id="1UWM"/>
    </source>
</evidence>
<dbReference type="EMBL" id="Y11304">
    <property type="protein sequence ID" value="CAA72162.1"/>
    <property type="molecule type" value="Genomic_DNA"/>
</dbReference>
<dbReference type="PIR" id="S45612">
    <property type="entry name" value="S45612"/>
</dbReference>
<dbReference type="RefSeq" id="WP_013068113.1">
    <property type="nucleotide sequence ID" value="NZ_VIBE01000001.1"/>
</dbReference>
<dbReference type="PDB" id="1E9M">
    <property type="method" value="X-ray"/>
    <property type="resolution" value="2.07 A"/>
    <property type="chains" value="A=2-107"/>
</dbReference>
<dbReference type="PDB" id="1UWM">
    <property type="method" value="X-ray"/>
    <property type="resolution" value="2.00 A"/>
    <property type="chains" value="A=2-107"/>
</dbReference>
<dbReference type="PDBsum" id="1E9M"/>
<dbReference type="PDBsum" id="1UWM"/>
<dbReference type="SMR" id="P80306"/>
<dbReference type="GeneID" id="31491235"/>
<dbReference type="OMA" id="TCHCIIR"/>
<dbReference type="EvolutionaryTrace" id="P80306"/>
<dbReference type="GO" id="GO:0051537">
    <property type="term" value="F:2 iron, 2 sulfur cluster binding"/>
    <property type="evidence" value="ECO:0007669"/>
    <property type="project" value="UniProtKB-KW"/>
</dbReference>
<dbReference type="GO" id="GO:0009055">
    <property type="term" value="F:electron transfer activity"/>
    <property type="evidence" value="ECO:0007669"/>
    <property type="project" value="TreeGrafter"/>
</dbReference>
<dbReference type="GO" id="GO:0046872">
    <property type="term" value="F:metal ion binding"/>
    <property type="evidence" value="ECO:0007669"/>
    <property type="project" value="UniProtKB-KW"/>
</dbReference>
<dbReference type="GO" id="GO:0140647">
    <property type="term" value="P:P450-containing electron transport chain"/>
    <property type="evidence" value="ECO:0007669"/>
    <property type="project" value="InterPro"/>
</dbReference>
<dbReference type="CDD" id="cd00207">
    <property type="entry name" value="fer2"/>
    <property type="match status" value="1"/>
</dbReference>
<dbReference type="Gene3D" id="3.10.20.30">
    <property type="match status" value="1"/>
</dbReference>
<dbReference type="InterPro" id="IPR036010">
    <property type="entry name" value="2Fe-2S_ferredoxin-like_sf"/>
</dbReference>
<dbReference type="InterPro" id="IPR001041">
    <property type="entry name" value="2Fe-2S_ferredoxin-type"/>
</dbReference>
<dbReference type="InterPro" id="IPR001055">
    <property type="entry name" value="Adrenodoxin-like"/>
</dbReference>
<dbReference type="InterPro" id="IPR018298">
    <property type="entry name" value="Adrenodoxin_Fe-S_BS"/>
</dbReference>
<dbReference type="InterPro" id="IPR012675">
    <property type="entry name" value="Beta-grasp_dom_sf"/>
</dbReference>
<dbReference type="PANTHER" id="PTHR23426:SF65">
    <property type="entry name" value="FERREDOXIN-2, MITOCHONDRIAL"/>
    <property type="match status" value="1"/>
</dbReference>
<dbReference type="PANTHER" id="PTHR23426">
    <property type="entry name" value="FERREDOXIN/ADRENODOXIN"/>
    <property type="match status" value="1"/>
</dbReference>
<dbReference type="Pfam" id="PF00111">
    <property type="entry name" value="Fer2"/>
    <property type="match status" value="1"/>
</dbReference>
<dbReference type="PRINTS" id="PR00355">
    <property type="entry name" value="ADRENODOXIN"/>
</dbReference>
<dbReference type="SUPFAM" id="SSF54292">
    <property type="entry name" value="2Fe-2S ferredoxin-like"/>
    <property type="match status" value="1"/>
</dbReference>
<dbReference type="PROSITE" id="PS51085">
    <property type="entry name" value="2FE2S_FER_2"/>
    <property type="match status" value="1"/>
</dbReference>
<dbReference type="PROSITE" id="PS00814">
    <property type="entry name" value="ADX"/>
    <property type="match status" value="1"/>
</dbReference>
<sequence>MAKIIFIEHNGTRHEVEAKPGLTVMEAARDNGVPGIDADCGGACACSTCHAYVDPAWVDKLPKALPTETDMIDFAYEPNPATSRLTCQIKVTSLLDGLVVHLPEKQI</sequence>
<organism>
    <name type="scientific">Rhodobacter capsulatus</name>
    <name type="common">Rhodopseudomonas capsulata</name>
    <dbReference type="NCBI Taxonomy" id="1061"/>
    <lineage>
        <taxon>Bacteria</taxon>
        <taxon>Pseudomonadati</taxon>
        <taxon>Pseudomonadota</taxon>
        <taxon>Alphaproteobacteria</taxon>
        <taxon>Rhodobacterales</taxon>
        <taxon>Rhodobacter group</taxon>
        <taxon>Rhodobacter</taxon>
    </lineage>
</organism>
<name>FER6_RHOCA</name>
<keyword id="KW-0001">2Fe-2S</keyword>
<keyword id="KW-0002">3D-structure</keyword>
<keyword id="KW-0903">Direct protein sequencing</keyword>
<keyword id="KW-0249">Electron transport</keyword>
<keyword id="KW-0408">Iron</keyword>
<keyword id="KW-0411">Iron-sulfur</keyword>
<keyword id="KW-0479">Metal-binding</keyword>
<keyword id="KW-0813">Transport</keyword>
<protein>
    <recommendedName>
        <fullName>Ferredoxin-6</fullName>
    </recommendedName>
    <alternativeName>
        <fullName evidence="7">Ferredoxin VI</fullName>
        <shortName evidence="7">FdVI</shortName>
    </alternativeName>
</protein>
<comment type="function">
    <text evidence="5 6">Ferredoxins are small electron carrier proteins that participate in various redox reactions. FdVI is an essential protein required for growth of R.capsulatus. May be involved in Fe-S cluster assembly.</text>
</comment>
<comment type="cofactor">
    <cofactor evidence="2 3 4">
        <name>[2Fe-2S] cluster</name>
        <dbReference type="ChEBI" id="CHEBI:190135"/>
    </cofactor>
    <text evidence="2 3 4">Binds 1 [2Fe-2S] cluster.</text>
</comment>
<comment type="induction">
    <text evidence="5">Seems to be constitutively expressed. Is expressed at a similar level under N-limited and N-sufficient conditions.</text>
</comment>
<comment type="disruption phenotype">
    <text evidence="5">Disruption of this gene is lethal.</text>
</comment>
<comment type="similarity">
    <text evidence="9">Belongs to the adrenodoxin/putidaredoxin family.</text>
</comment>
<feature type="initiator methionine" description="Removed" evidence="4">
    <location>
        <position position="1"/>
    </location>
</feature>
<feature type="chain" id="PRO_0000201180" description="Ferredoxin-6">
    <location>
        <begin position="2"/>
        <end position="107"/>
    </location>
</feature>
<feature type="domain" description="2Fe-2S ferredoxin-type" evidence="1">
    <location>
        <begin position="2"/>
        <end position="106"/>
    </location>
</feature>
<feature type="binding site" evidence="2 3">
    <location>
        <position position="40"/>
    </location>
    <ligand>
        <name>[2Fe-2S] cluster</name>
        <dbReference type="ChEBI" id="CHEBI:190135"/>
    </ligand>
</feature>
<feature type="binding site" evidence="2 3">
    <location>
        <position position="46"/>
    </location>
    <ligand>
        <name>[2Fe-2S] cluster</name>
        <dbReference type="ChEBI" id="CHEBI:190135"/>
    </ligand>
</feature>
<feature type="binding site" evidence="2 3">
    <location>
        <position position="49"/>
    </location>
    <ligand>
        <name>[2Fe-2S] cluster</name>
        <dbReference type="ChEBI" id="CHEBI:190135"/>
    </ligand>
</feature>
<feature type="binding site" evidence="2 3">
    <location>
        <position position="87"/>
    </location>
    <ligand>
        <name>[2Fe-2S] cluster</name>
        <dbReference type="ChEBI" id="CHEBI:190135"/>
    </ligand>
</feature>
<feature type="strand" evidence="10">
    <location>
        <begin position="3"/>
        <end position="7"/>
    </location>
</feature>
<feature type="strand" evidence="10">
    <location>
        <begin position="13"/>
        <end position="17"/>
    </location>
</feature>
<feature type="helix" evidence="10">
    <location>
        <begin position="24"/>
        <end position="29"/>
    </location>
</feature>
<feature type="turn" evidence="10">
    <location>
        <begin position="30"/>
        <end position="32"/>
    </location>
</feature>
<feature type="strand" evidence="10">
    <location>
        <begin position="41"/>
        <end position="46"/>
    </location>
</feature>
<feature type="strand" evidence="10">
    <location>
        <begin position="50"/>
        <end position="53"/>
    </location>
</feature>
<feature type="helix" evidence="10">
    <location>
        <begin position="55"/>
        <end position="58"/>
    </location>
</feature>
<feature type="helix" evidence="10">
    <location>
        <begin position="66"/>
        <end position="72"/>
    </location>
</feature>
<feature type="strand" evidence="10">
    <location>
        <begin position="75"/>
        <end position="77"/>
    </location>
</feature>
<feature type="turn" evidence="10">
    <location>
        <begin position="80"/>
        <end position="82"/>
    </location>
</feature>
<feature type="strand" evidence="10">
    <location>
        <begin position="83"/>
        <end position="85"/>
    </location>
</feature>
<feature type="helix" evidence="10">
    <location>
        <begin position="86"/>
        <end position="88"/>
    </location>
</feature>
<feature type="helix" evidence="10">
    <location>
        <begin position="93"/>
        <end position="95"/>
    </location>
</feature>
<feature type="strand" evidence="10">
    <location>
        <begin position="98"/>
        <end position="101"/>
    </location>
</feature>
<gene>
    <name evidence="8" type="primary">fdxE</name>
</gene>
<accession>P80306</accession>
<accession>Q9R767</accession>